<dbReference type="EMBL" id="AM260522">
    <property type="protein sequence ID" value="CAK00377.1"/>
    <property type="molecule type" value="Genomic_DNA"/>
</dbReference>
<dbReference type="RefSeq" id="WP_011578460.1">
    <property type="nucleotide sequence ID" value="NC_008229.1"/>
</dbReference>
<dbReference type="SMR" id="Q17VE9"/>
<dbReference type="STRING" id="382638.Hac_1674"/>
<dbReference type="GeneID" id="31758920"/>
<dbReference type="KEGG" id="hac:Hac_1674"/>
<dbReference type="eggNOG" id="COG0218">
    <property type="taxonomic scope" value="Bacteria"/>
</dbReference>
<dbReference type="HOGENOM" id="CLU_033732_3_2_7"/>
<dbReference type="OrthoDB" id="9804921at2"/>
<dbReference type="BioCyc" id="HACI382638:HAC_RS07110-MONOMER"/>
<dbReference type="Proteomes" id="UP000000775">
    <property type="component" value="Chromosome"/>
</dbReference>
<dbReference type="GO" id="GO:0005829">
    <property type="term" value="C:cytosol"/>
    <property type="evidence" value="ECO:0007669"/>
    <property type="project" value="TreeGrafter"/>
</dbReference>
<dbReference type="GO" id="GO:0005525">
    <property type="term" value="F:GTP binding"/>
    <property type="evidence" value="ECO:0007669"/>
    <property type="project" value="UniProtKB-UniRule"/>
</dbReference>
<dbReference type="GO" id="GO:0046872">
    <property type="term" value="F:metal ion binding"/>
    <property type="evidence" value="ECO:0007669"/>
    <property type="project" value="UniProtKB-KW"/>
</dbReference>
<dbReference type="GO" id="GO:0000917">
    <property type="term" value="P:division septum assembly"/>
    <property type="evidence" value="ECO:0007669"/>
    <property type="project" value="UniProtKB-KW"/>
</dbReference>
<dbReference type="CDD" id="cd01876">
    <property type="entry name" value="YihA_EngB"/>
    <property type="match status" value="1"/>
</dbReference>
<dbReference type="Gene3D" id="3.40.50.300">
    <property type="entry name" value="P-loop containing nucleotide triphosphate hydrolases"/>
    <property type="match status" value="1"/>
</dbReference>
<dbReference type="HAMAP" id="MF_00321">
    <property type="entry name" value="GTPase_EngB"/>
    <property type="match status" value="1"/>
</dbReference>
<dbReference type="InterPro" id="IPR030393">
    <property type="entry name" value="G_ENGB_dom"/>
</dbReference>
<dbReference type="InterPro" id="IPR006073">
    <property type="entry name" value="GTP-bd"/>
</dbReference>
<dbReference type="InterPro" id="IPR019987">
    <property type="entry name" value="GTP-bd_ribosome_bio_YsxC"/>
</dbReference>
<dbReference type="InterPro" id="IPR027417">
    <property type="entry name" value="P-loop_NTPase"/>
</dbReference>
<dbReference type="NCBIfam" id="TIGR03598">
    <property type="entry name" value="GTPase_YsxC"/>
    <property type="match status" value="1"/>
</dbReference>
<dbReference type="PANTHER" id="PTHR11649:SF13">
    <property type="entry name" value="ENGB-TYPE G DOMAIN-CONTAINING PROTEIN"/>
    <property type="match status" value="1"/>
</dbReference>
<dbReference type="PANTHER" id="PTHR11649">
    <property type="entry name" value="MSS1/TRME-RELATED GTP-BINDING PROTEIN"/>
    <property type="match status" value="1"/>
</dbReference>
<dbReference type="Pfam" id="PF01926">
    <property type="entry name" value="MMR_HSR1"/>
    <property type="match status" value="1"/>
</dbReference>
<dbReference type="SUPFAM" id="SSF52540">
    <property type="entry name" value="P-loop containing nucleoside triphosphate hydrolases"/>
    <property type="match status" value="1"/>
</dbReference>
<dbReference type="PROSITE" id="PS51706">
    <property type="entry name" value="G_ENGB"/>
    <property type="match status" value="1"/>
</dbReference>
<keyword id="KW-0131">Cell cycle</keyword>
<keyword id="KW-0132">Cell division</keyword>
<keyword id="KW-0342">GTP-binding</keyword>
<keyword id="KW-0460">Magnesium</keyword>
<keyword id="KW-0479">Metal-binding</keyword>
<keyword id="KW-0547">Nucleotide-binding</keyword>
<keyword id="KW-0717">Septation</keyword>
<name>ENGB_HELAH</name>
<feature type="chain" id="PRO_1000005818" description="Probable GTP-binding protein EngB">
    <location>
        <begin position="1"/>
        <end position="208"/>
    </location>
</feature>
<feature type="domain" description="EngB-type G" evidence="1">
    <location>
        <begin position="23"/>
        <end position="205"/>
    </location>
</feature>
<feature type="binding site" evidence="1">
    <location>
        <begin position="31"/>
        <end position="38"/>
    </location>
    <ligand>
        <name>GTP</name>
        <dbReference type="ChEBI" id="CHEBI:37565"/>
    </ligand>
</feature>
<feature type="binding site" evidence="1">
    <location>
        <position position="38"/>
    </location>
    <ligand>
        <name>Mg(2+)</name>
        <dbReference type="ChEBI" id="CHEBI:18420"/>
    </ligand>
</feature>
<feature type="binding site" evidence="1">
    <location>
        <begin position="57"/>
        <end position="61"/>
    </location>
    <ligand>
        <name>GTP</name>
        <dbReference type="ChEBI" id="CHEBI:37565"/>
    </ligand>
</feature>
<feature type="binding site" evidence="1">
    <location>
        <position position="59"/>
    </location>
    <ligand>
        <name>Mg(2+)</name>
        <dbReference type="ChEBI" id="CHEBI:18420"/>
    </ligand>
</feature>
<feature type="binding site" evidence="1">
    <location>
        <begin position="84"/>
        <end position="87"/>
    </location>
    <ligand>
        <name>GTP</name>
        <dbReference type="ChEBI" id="CHEBI:37565"/>
    </ligand>
</feature>
<feature type="binding site" evidence="1">
    <location>
        <begin position="154"/>
        <end position="157"/>
    </location>
    <ligand>
        <name>GTP</name>
        <dbReference type="ChEBI" id="CHEBI:37565"/>
    </ligand>
</feature>
<feature type="binding site" evidence="1">
    <location>
        <begin position="182"/>
        <end position="184"/>
    </location>
    <ligand>
        <name>GTP</name>
        <dbReference type="ChEBI" id="CHEBI:37565"/>
    </ligand>
</feature>
<reference key="1">
    <citation type="journal article" date="2006" name="PLoS Genet.">
        <title>Who ate whom? Adaptive Helicobacter genomic changes that accompanied a host jump from early humans to large felines.</title>
        <authorList>
            <person name="Eppinger M."/>
            <person name="Baar C."/>
            <person name="Linz B."/>
            <person name="Raddatz G."/>
            <person name="Lanz C."/>
            <person name="Keller H."/>
            <person name="Morelli G."/>
            <person name="Gressmann H."/>
            <person name="Achtman M."/>
            <person name="Schuster S.C."/>
        </authorList>
    </citation>
    <scope>NUCLEOTIDE SEQUENCE [LARGE SCALE GENOMIC DNA]</scope>
    <source>
        <strain>Sheeba</strain>
    </source>
</reference>
<organism>
    <name type="scientific">Helicobacter acinonychis (strain Sheeba)</name>
    <dbReference type="NCBI Taxonomy" id="382638"/>
    <lineage>
        <taxon>Bacteria</taxon>
        <taxon>Pseudomonadati</taxon>
        <taxon>Campylobacterota</taxon>
        <taxon>Epsilonproteobacteria</taxon>
        <taxon>Campylobacterales</taxon>
        <taxon>Helicobacteraceae</taxon>
        <taxon>Helicobacter</taxon>
    </lineage>
</organism>
<gene>
    <name evidence="1" type="primary">engB</name>
    <name type="ordered locus">Hac_1674</name>
</gene>
<accession>Q17VE9</accession>
<proteinExistence type="inferred from homology"/>
<sequence length="208" mass="23567">MIIIKDAHFITSSSQLSQCPASLTSEMVVLGRSNVGKSSFINTLLGKNLAKSSSTPGKTRLANFFSTTWEDKKNALTTTFSVIDLPGFGYAKVSKSLKKEWEGFLWELLSVRTSIKLFIHLIDARHLNLEIDKNAKENIQTLLRSDQAYLSLFTKFDKLNKNEQHRLFLNAPKPFLINTTHFNALSSKYPTLEIVRQTLLKYLLTNPL</sequence>
<evidence type="ECO:0000255" key="1">
    <source>
        <dbReference type="HAMAP-Rule" id="MF_00321"/>
    </source>
</evidence>
<comment type="function">
    <text evidence="1">Necessary for normal cell division and for the maintenance of normal septation.</text>
</comment>
<comment type="cofactor">
    <cofactor evidence="1">
        <name>Mg(2+)</name>
        <dbReference type="ChEBI" id="CHEBI:18420"/>
    </cofactor>
</comment>
<comment type="similarity">
    <text evidence="1">Belongs to the TRAFAC class TrmE-Era-EngA-EngB-Septin-like GTPase superfamily. EngB GTPase family.</text>
</comment>
<protein>
    <recommendedName>
        <fullName evidence="1">Probable GTP-binding protein EngB</fullName>
    </recommendedName>
</protein>